<gene>
    <name type="primary">MT-CYB</name>
    <name type="synonym">COB</name>
    <name type="synonym">CYTB</name>
    <name type="synonym">MTCYB</name>
</gene>
<reference key="1">
    <citation type="journal article" date="1999" name="J. Mammal. Evol.">
        <title>Phylogenetic relationships and the radiation of sigmodontine rodents in South America: evidence from cytochrome b.</title>
        <authorList>
            <person name="Smith M.F."/>
            <person name="Patton J.L."/>
        </authorList>
    </citation>
    <scope>NUCLEOTIDE SEQUENCE [GENOMIC DNA]</scope>
    <source>
        <strain>Isolate UMMZ 133965</strain>
        <tissue>Liver</tissue>
    </source>
</reference>
<reference key="2">
    <citation type="journal article" date="1993" name="Biol. J. Linn. Soc. Lond.">
        <title>Diversification of South American murid rodents: evidence from mitochondrial DNA sequence data for the akodontine tribe.</title>
        <authorList>
            <person name="Smith M.F."/>
            <person name="Patton J.L."/>
        </authorList>
    </citation>
    <scope>NUCLEOTIDE SEQUENCE [GENOMIC DNA] OF 1-267</scope>
    <source>
        <strain>Isolate UMMZ 133965</strain>
        <tissue>Liver</tissue>
    </source>
</reference>
<sequence>MKILRKNHPLLKIINHSFIDLPTPSNISSWWNFGSLLGMCLMIQILTGLFLAMHYTSDTTTAFSSVAHICRDVNYGWLIRYLHANGASMFFICLFIHVGRGIYYGSYVLSETWNIGIILFLTTMATAFVGYVLPWGQMSFWGATVITNLLSAIPYIGSTLVEWIWGGFSVDKATLTRFFAFHFILPFIITAFVLVHLLFLHETGSNNPSGLNSNSDKIPFHPYYTIKDLLGILFLLTALMILALFFPDILGDPDNYTPANPLNTPAHIKPEWYFLFAYAILRSIPNKLGGVLALLLSILILMAFPLLNTSKQHGLIFRPITQTIYWILIANLLVLTWIGGQPVEYPFTMIGQIASITYFAIILILXPVSNTIENNIIKL</sequence>
<geneLocation type="mitochondrion"/>
<protein>
    <recommendedName>
        <fullName>Cytochrome b</fullName>
    </recommendedName>
    <alternativeName>
        <fullName>Complex III subunit 3</fullName>
    </alternativeName>
    <alternativeName>
        <fullName>Complex III subunit III</fullName>
    </alternativeName>
    <alternativeName>
        <fullName>Cytochrome b-c1 complex subunit 3</fullName>
    </alternativeName>
    <alternativeName>
        <fullName>Ubiquinol-cytochrome-c reductase complex cytochrome b subunit</fullName>
    </alternativeName>
</protein>
<dbReference type="EMBL" id="U03527">
    <property type="protein sequence ID" value="AAD12554.2"/>
    <property type="molecule type" value="Genomic_DNA"/>
</dbReference>
<dbReference type="GO" id="GO:0005743">
    <property type="term" value="C:mitochondrial inner membrane"/>
    <property type="evidence" value="ECO:0007669"/>
    <property type="project" value="UniProtKB-SubCell"/>
</dbReference>
<dbReference type="GO" id="GO:0045275">
    <property type="term" value="C:respiratory chain complex III"/>
    <property type="evidence" value="ECO:0007669"/>
    <property type="project" value="InterPro"/>
</dbReference>
<dbReference type="GO" id="GO:0046872">
    <property type="term" value="F:metal ion binding"/>
    <property type="evidence" value="ECO:0007669"/>
    <property type="project" value="UniProtKB-KW"/>
</dbReference>
<dbReference type="GO" id="GO:0008121">
    <property type="term" value="F:ubiquinol-cytochrome-c reductase activity"/>
    <property type="evidence" value="ECO:0007669"/>
    <property type="project" value="InterPro"/>
</dbReference>
<dbReference type="GO" id="GO:0006122">
    <property type="term" value="P:mitochondrial electron transport, ubiquinol to cytochrome c"/>
    <property type="evidence" value="ECO:0007669"/>
    <property type="project" value="TreeGrafter"/>
</dbReference>
<dbReference type="CDD" id="cd00290">
    <property type="entry name" value="cytochrome_b_C"/>
    <property type="match status" value="1"/>
</dbReference>
<dbReference type="CDD" id="cd00284">
    <property type="entry name" value="Cytochrome_b_N"/>
    <property type="match status" value="1"/>
</dbReference>
<dbReference type="FunFam" id="1.20.810.10:FF:000002">
    <property type="entry name" value="Cytochrome b"/>
    <property type="match status" value="1"/>
</dbReference>
<dbReference type="Gene3D" id="1.20.810.10">
    <property type="entry name" value="Cytochrome Bc1 Complex, Chain C"/>
    <property type="match status" value="1"/>
</dbReference>
<dbReference type="InterPro" id="IPR005798">
    <property type="entry name" value="Cyt_b/b6_C"/>
</dbReference>
<dbReference type="InterPro" id="IPR036150">
    <property type="entry name" value="Cyt_b/b6_C_sf"/>
</dbReference>
<dbReference type="InterPro" id="IPR005797">
    <property type="entry name" value="Cyt_b/b6_N"/>
</dbReference>
<dbReference type="InterPro" id="IPR027387">
    <property type="entry name" value="Cytb/b6-like_sf"/>
</dbReference>
<dbReference type="InterPro" id="IPR030689">
    <property type="entry name" value="Cytochrome_b"/>
</dbReference>
<dbReference type="InterPro" id="IPR048260">
    <property type="entry name" value="Cytochrome_b_C_euk/bac"/>
</dbReference>
<dbReference type="InterPro" id="IPR048259">
    <property type="entry name" value="Cytochrome_b_N_euk/bac"/>
</dbReference>
<dbReference type="InterPro" id="IPR016174">
    <property type="entry name" value="Di-haem_cyt_TM"/>
</dbReference>
<dbReference type="PANTHER" id="PTHR19271">
    <property type="entry name" value="CYTOCHROME B"/>
    <property type="match status" value="1"/>
</dbReference>
<dbReference type="PANTHER" id="PTHR19271:SF16">
    <property type="entry name" value="CYTOCHROME B"/>
    <property type="match status" value="1"/>
</dbReference>
<dbReference type="Pfam" id="PF00032">
    <property type="entry name" value="Cytochrom_B_C"/>
    <property type="match status" value="1"/>
</dbReference>
<dbReference type="Pfam" id="PF00033">
    <property type="entry name" value="Cytochrome_B"/>
    <property type="match status" value="1"/>
</dbReference>
<dbReference type="PIRSF" id="PIRSF038885">
    <property type="entry name" value="COB"/>
    <property type="match status" value="1"/>
</dbReference>
<dbReference type="SUPFAM" id="SSF81648">
    <property type="entry name" value="a domain/subunit of cytochrome bc1 complex (Ubiquinol-cytochrome c reductase)"/>
    <property type="match status" value="1"/>
</dbReference>
<dbReference type="SUPFAM" id="SSF81342">
    <property type="entry name" value="Transmembrane di-heme cytochromes"/>
    <property type="match status" value="1"/>
</dbReference>
<dbReference type="PROSITE" id="PS51003">
    <property type="entry name" value="CYTB_CTER"/>
    <property type="match status" value="1"/>
</dbReference>
<dbReference type="PROSITE" id="PS51002">
    <property type="entry name" value="CYTB_NTER"/>
    <property type="match status" value="1"/>
</dbReference>
<comment type="function">
    <text evidence="2">Component of the ubiquinol-cytochrome c reductase complex (complex III or cytochrome b-c1 complex) that is part of the mitochondrial respiratory chain. The b-c1 complex mediates electron transfer from ubiquinol to cytochrome c. Contributes to the generation of a proton gradient across the mitochondrial membrane that is then used for ATP synthesis.</text>
</comment>
<comment type="cofactor">
    <cofactor evidence="2">
        <name>heme b</name>
        <dbReference type="ChEBI" id="CHEBI:60344"/>
    </cofactor>
    <text evidence="2">Binds 2 heme b groups non-covalently.</text>
</comment>
<comment type="subunit">
    <text evidence="2">The cytochrome bc1 complex contains 11 subunits: 3 respiratory subunits (MT-CYB, CYC1 and UQCRFS1), 2 core proteins (UQCRC1 and UQCRC2) and 6 low-molecular weight proteins (UQCRH/QCR6, UQCRB/QCR7, UQCRQ/QCR8, UQCR10/QCR9, UQCR11/QCR10 and a cleavage product of UQCRFS1). This cytochrome bc1 complex then forms a dimer.</text>
</comment>
<comment type="subcellular location">
    <subcellularLocation>
        <location evidence="2">Mitochondrion inner membrane</location>
        <topology evidence="2">Multi-pass membrane protein</topology>
    </subcellularLocation>
</comment>
<comment type="miscellaneous">
    <text evidence="1">Heme 1 (or BL or b562) is low-potential and absorbs at about 562 nm, and heme 2 (or BH or b566) is high-potential and absorbs at about 566 nm.</text>
</comment>
<comment type="similarity">
    <text evidence="3 4">Belongs to the cytochrome b family.</text>
</comment>
<comment type="caution">
    <text evidence="2">The full-length protein contains only eight transmembrane helices, not nine as predicted by bioinformatics tools.</text>
</comment>
<evidence type="ECO:0000250" key="1"/>
<evidence type="ECO:0000250" key="2">
    <source>
        <dbReference type="UniProtKB" id="P00157"/>
    </source>
</evidence>
<evidence type="ECO:0000255" key="3">
    <source>
        <dbReference type="PROSITE-ProRule" id="PRU00967"/>
    </source>
</evidence>
<evidence type="ECO:0000255" key="4">
    <source>
        <dbReference type="PROSITE-ProRule" id="PRU00968"/>
    </source>
</evidence>
<organism>
    <name type="scientific">Akodon toba</name>
    <name type="common">Chaco grass mouse</name>
    <dbReference type="NCBI Taxonomy" id="29101"/>
    <lineage>
        <taxon>Eukaryota</taxon>
        <taxon>Metazoa</taxon>
        <taxon>Chordata</taxon>
        <taxon>Craniata</taxon>
        <taxon>Vertebrata</taxon>
        <taxon>Euteleostomi</taxon>
        <taxon>Mammalia</taxon>
        <taxon>Eutheria</taxon>
        <taxon>Euarchontoglires</taxon>
        <taxon>Glires</taxon>
        <taxon>Rodentia</taxon>
        <taxon>Myomorpha</taxon>
        <taxon>Muroidea</taxon>
        <taxon>Cricetidae</taxon>
        <taxon>Sigmodontinae</taxon>
        <taxon>Akodon</taxon>
    </lineage>
</organism>
<proteinExistence type="inferred from homology"/>
<feature type="chain" id="PRO_0000060556" description="Cytochrome b">
    <location>
        <begin position="1"/>
        <end position="379"/>
    </location>
</feature>
<feature type="transmembrane region" description="Helical" evidence="2">
    <location>
        <begin position="33"/>
        <end position="53"/>
    </location>
</feature>
<feature type="transmembrane region" description="Helical" evidence="2">
    <location>
        <begin position="77"/>
        <end position="98"/>
    </location>
</feature>
<feature type="transmembrane region" description="Helical" evidence="2">
    <location>
        <begin position="113"/>
        <end position="133"/>
    </location>
</feature>
<feature type="transmembrane region" description="Helical" evidence="2">
    <location>
        <begin position="178"/>
        <end position="198"/>
    </location>
</feature>
<feature type="transmembrane region" description="Helical" evidence="2">
    <location>
        <begin position="226"/>
        <end position="246"/>
    </location>
</feature>
<feature type="transmembrane region" description="Helical" evidence="2">
    <location>
        <begin position="288"/>
        <end position="308"/>
    </location>
</feature>
<feature type="transmembrane region" description="Helical" evidence="2">
    <location>
        <begin position="320"/>
        <end position="340"/>
    </location>
</feature>
<feature type="transmembrane region" description="Helical" evidence="2">
    <location>
        <begin position="347"/>
        <end position="367"/>
    </location>
</feature>
<feature type="binding site" description="axial binding residue" evidence="2">
    <location>
        <position position="83"/>
    </location>
    <ligand>
        <name>heme b</name>
        <dbReference type="ChEBI" id="CHEBI:60344"/>
        <label>b562</label>
    </ligand>
    <ligandPart>
        <name>Fe</name>
        <dbReference type="ChEBI" id="CHEBI:18248"/>
    </ligandPart>
</feature>
<feature type="binding site" description="axial binding residue" evidence="2">
    <location>
        <position position="97"/>
    </location>
    <ligand>
        <name>heme b</name>
        <dbReference type="ChEBI" id="CHEBI:60344"/>
        <label>b566</label>
    </ligand>
    <ligandPart>
        <name>Fe</name>
        <dbReference type="ChEBI" id="CHEBI:18248"/>
    </ligandPart>
</feature>
<feature type="binding site" description="axial binding residue" evidence="2">
    <location>
        <position position="182"/>
    </location>
    <ligand>
        <name>heme b</name>
        <dbReference type="ChEBI" id="CHEBI:60344"/>
        <label>b562</label>
    </ligand>
    <ligandPart>
        <name>Fe</name>
        <dbReference type="ChEBI" id="CHEBI:18248"/>
    </ligandPart>
</feature>
<feature type="binding site" description="axial binding residue" evidence="2">
    <location>
        <position position="196"/>
    </location>
    <ligand>
        <name>heme b</name>
        <dbReference type="ChEBI" id="CHEBI:60344"/>
        <label>b566</label>
    </ligand>
    <ligandPart>
        <name>Fe</name>
        <dbReference type="ChEBI" id="CHEBI:18248"/>
    </ligandPart>
</feature>
<feature type="binding site" evidence="2">
    <location>
        <position position="201"/>
    </location>
    <ligand>
        <name>a ubiquinone</name>
        <dbReference type="ChEBI" id="CHEBI:16389"/>
    </ligand>
</feature>
<name>CYB_AKOTB</name>
<accession>Q33887</accession>
<keyword id="KW-0249">Electron transport</keyword>
<keyword id="KW-0349">Heme</keyword>
<keyword id="KW-0408">Iron</keyword>
<keyword id="KW-0472">Membrane</keyword>
<keyword id="KW-0479">Metal-binding</keyword>
<keyword id="KW-0496">Mitochondrion</keyword>
<keyword id="KW-0999">Mitochondrion inner membrane</keyword>
<keyword id="KW-0679">Respiratory chain</keyword>
<keyword id="KW-0812">Transmembrane</keyword>
<keyword id="KW-1133">Transmembrane helix</keyword>
<keyword id="KW-0813">Transport</keyword>
<keyword id="KW-0830">Ubiquinone</keyword>